<protein>
    <recommendedName>
        <fullName>Cysteine--tRNA ligase</fullName>
        <ecNumber>6.1.1.16</ecNumber>
    </recommendedName>
    <alternativeName>
        <fullName>Cysteinyl-tRNA synthetase</fullName>
        <shortName>CysRS</shortName>
    </alternativeName>
</protein>
<sequence length="118" mass="13846">MITLYNTLTRQKETFEPIEPGKVKMYVCGPTVYNYIHIGNARPAINYDVVRRYFEYQGYEVIYVSNFTDVDDKLIKRSKELDESVETITDRYIKAFYEDVGALNVKKATSNPRVMNHM</sequence>
<accession>P77986</accession>
<proteinExistence type="inferred from homology"/>
<evidence type="ECO:0000250" key="1"/>
<evidence type="ECO:0000305" key="2"/>
<comment type="catalytic activity">
    <reaction>
        <text>tRNA(Cys) + L-cysteine + ATP = L-cysteinyl-tRNA(Cys) + AMP + diphosphate</text>
        <dbReference type="Rhea" id="RHEA:17773"/>
        <dbReference type="Rhea" id="RHEA-COMP:9661"/>
        <dbReference type="Rhea" id="RHEA-COMP:9679"/>
        <dbReference type="ChEBI" id="CHEBI:30616"/>
        <dbReference type="ChEBI" id="CHEBI:33019"/>
        <dbReference type="ChEBI" id="CHEBI:35235"/>
        <dbReference type="ChEBI" id="CHEBI:78442"/>
        <dbReference type="ChEBI" id="CHEBI:78517"/>
        <dbReference type="ChEBI" id="CHEBI:456215"/>
        <dbReference type="EC" id="6.1.1.16"/>
    </reaction>
</comment>
<comment type="cofactor">
    <cofactor evidence="1">
        <name>Zn(2+)</name>
        <dbReference type="ChEBI" id="CHEBI:29105"/>
    </cofactor>
    <text evidence="1">Binds 1 zinc ion per subunit.</text>
</comment>
<comment type="subunit">
    <text evidence="1">Monomer.</text>
</comment>
<comment type="subcellular location">
    <subcellularLocation>
        <location evidence="1">Cytoplasm</location>
    </subcellularLocation>
</comment>
<comment type="similarity">
    <text evidence="2">Belongs to the class-I aminoacyl-tRNA synthetase family.</text>
</comment>
<keyword id="KW-0030">Aminoacyl-tRNA synthetase</keyword>
<keyword id="KW-0067">ATP-binding</keyword>
<keyword id="KW-0963">Cytoplasm</keyword>
<keyword id="KW-0436">Ligase</keyword>
<keyword id="KW-0479">Metal-binding</keyword>
<keyword id="KW-0547">Nucleotide-binding</keyword>
<keyword id="KW-0648">Protein biosynthesis</keyword>
<keyword id="KW-0862">Zinc</keyword>
<organism>
    <name type="scientific">Staphylococcus xylosus</name>
    <dbReference type="NCBI Taxonomy" id="1288"/>
    <lineage>
        <taxon>Bacteria</taxon>
        <taxon>Bacillati</taxon>
        <taxon>Bacillota</taxon>
        <taxon>Bacilli</taxon>
        <taxon>Bacillales</taxon>
        <taxon>Staphylococcaceae</taxon>
        <taxon>Staphylococcus</taxon>
    </lineage>
</organism>
<reference key="1">
    <citation type="journal article" date="1997" name="FEMS Microbiol. Lett.">
        <title>Identification of the serine acetyltransferase gene of Staphylococcus xylosus.</title>
        <authorList>
            <person name="Fiegler H."/>
            <person name="Brueckner R."/>
        </authorList>
    </citation>
    <scope>NUCLEOTIDE SEQUENCE [GENOMIC DNA]</scope>
    <source>
        <strain>DSM 20267 / Isolate C2A</strain>
    </source>
</reference>
<dbReference type="EC" id="6.1.1.16"/>
<dbReference type="EMBL" id="Y07614">
    <property type="protein sequence ID" value="CAA68888.1"/>
    <property type="molecule type" value="Genomic_DNA"/>
</dbReference>
<dbReference type="SMR" id="P77986"/>
<dbReference type="STRING" id="1288.AWC37_00065"/>
<dbReference type="eggNOG" id="COG0215">
    <property type="taxonomic scope" value="Bacteria"/>
</dbReference>
<dbReference type="GO" id="GO:0005829">
    <property type="term" value="C:cytosol"/>
    <property type="evidence" value="ECO:0007669"/>
    <property type="project" value="TreeGrafter"/>
</dbReference>
<dbReference type="GO" id="GO:0005524">
    <property type="term" value="F:ATP binding"/>
    <property type="evidence" value="ECO:0007669"/>
    <property type="project" value="UniProtKB-KW"/>
</dbReference>
<dbReference type="GO" id="GO:0004817">
    <property type="term" value="F:cysteine-tRNA ligase activity"/>
    <property type="evidence" value="ECO:0007669"/>
    <property type="project" value="UniProtKB-EC"/>
</dbReference>
<dbReference type="GO" id="GO:0046872">
    <property type="term" value="F:metal ion binding"/>
    <property type="evidence" value="ECO:0007669"/>
    <property type="project" value="UniProtKB-KW"/>
</dbReference>
<dbReference type="GO" id="GO:0006423">
    <property type="term" value="P:cysteinyl-tRNA aminoacylation"/>
    <property type="evidence" value="ECO:0007669"/>
    <property type="project" value="TreeGrafter"/>
</dbReference>
<dbReference type="Gene3D" id="3.40.50.620">
    <property type="entry name" value="HUPs"/>
    <property type="match status" value="1"/>
</dbReference>
<dbReference type="InterPro" id="IPR024909">
    <property type="entry name" value="Cys-tRNA/MSH_ligase"/>
</dbReference>
<dbReference type="InterPro" id="IPR014729">
    <property type="entry name" value="Rossmann-like_a/b/a_fold"/>
</dbReference>
<dbReference type="InterPro" id="IPR032678">
    <property type="entry name" value="tRNA-synt_1_cat_dom"/>
</dbReference>
<dbReference type="PANTHER" id="PTHR10890:SF3">
    <property type="entry name" value="CYSTEINE--TRNA LIGASE, CYTOPLASMIC"/>
    <property type="match status" value="1"/>
</dbReference>
<dbReference type="PANTHER" id="PTHR10890">
    <property type="entry name" value="CYSTEINYL-TRNA SYNTHETASE"/>
    <property type="match status" value="1"/>
</dbReference>
<dbReference type="Pfam" id="PF01406">
    <property type="entry name" value="tRNA-synt_1e"/>
    <property type="match status" value="1"/>
</dbReference>
<dbReference type="PRINTS" id="PR00983">
    <property type="entry name" value="TRNASYNTHCYS"/>
</dbReference>
<dbReference type="SUPFAM" id="SSF52374">
    <property type="entry name" value="Nucleotidylyl transferase"/>
    <property type="match status" value="1"/>
</dbReference>
<feature type="chain" id="PRO_0000159485" description="Cysteine--tRNA ligase">
    <location>
        <begin position="1"/>
        <end position="118" status="greater than"/>
    </location>
</feature>
<feature type="short sequence motif" description="'HIGH' region">
    <location>
        <begin position="30"/>
        <end position="40"/>
    </location>
</feature>
<feature type="binding site" evidence="1">
    <location>
        <position position="28"/>
    </location>
    <ligand>
        <name>Zn(2+)</name>
        <dbReference type="ChEBI" id="CHEBI:29105"/>
    </ligand>
</feature>
<feature type="non-terminal residue">
    <location>
        <position position="118"/>
    </location>
</feature>
<gene>
    <name type="primary">cysS</name>
</gene>
<name>SYC_STAXY</name>